<dbReference type="EC" id="2.4.99.23" evidence="6"/>
<dbReference type="EMBL" id="M95927">
    <property type="status" value="NOT_ANNOTATED_CDS"/>
    <property type="molecule type" value="Genomic_DNA"/>
</dbReference>
<dbReference type="EMBL" id="AE006468">
    <property type="protein sequence ID" value="AAL22571.1"/>
    <property type="molecule type" value="Genomic_DNA"/>
</dbReference>
<dbReference type="EMBL" id="M73826">
    <property type="protein sequence ID" value="AAA27205.1"/>
    <property type="molecule type" value="Genomic_DNA"/>
</dbReference>
<dbReference type="PIR" id="A44156">
    <property type="entry name" value="A44156"/>
</dbReference>
<dbReference type="RefSeq" id="NP_462612.1">
    <property type="nucleotide sequence ID" value="NC_003197.2"/>
</dbReference>
<dbReference type="RefSeq" id="WP_001264604.1">
    <property type="nucleotide sequence ID" value="NC_003197.2"/>
</dbReference>
<dbReference type="SMR" id="P26469"/>
<dbReference type="STRING" id="99287.STM3712"/>
<dbReference type="CAZy" id="GT9">
    <property type="family name" value="Glycosyltransferase Family 9"/>
</dbReference>
<dbReference type="PaxDb" id="99287-STM3712"/>
<dbReference type="GeneID" id="1255236"/>
<dbReference type="KEGG" id="stm:STM3712"/>
<dbReference type="PATRIC" id="fig|99287.12.peg.3926"/>
<dbReference type="HOGENOM" id="CLU_038371_6_0_6"/>
<dbReference type="OMA" id="ITHLAWA"/>
<dbReference type="PhylomeDB" id="P26469"/>
<dbReference type="BioCyc" id="MetaCyc:STM3712-MONOMER"/>
<dbReference type="BioCyc" id="SENT99287:STM3712-MONOMER"/>
<dbReference type="UniPathway" id="UPA00958"/>
<dbReference type="PHI-base" id="PHI:9594"/>
<dbReference type="Proteomes" id="UP000001014">
    <property type="component" value="Chromosome"/>
</dbReference>
<dbReference type="GO" id="GO:0005829">
    <property type="term" value="C:cytosol"/>
    <property type="evidence" value="ECO:0000318"/>
    <property type="project" value="GO_Central"/>
</dbReference>
<dbReference type="GO" id="GO:0005886">
    <property type="term" value="C:plasma membrane"/>
    <property type="evidence" value="ECO:0007669"/>
    <property type="project" value="UniProtKB-SubCell"/>
</dbReference>
<dbReference type="GO" id="GO:0008713">
    <property type="term" value="F:ADP-heptose-lipopolysaccharide heptosyltransferase activity"/>
    <property type="evidence" value="ECO:0000318"/>
    <property type="project" value="GO_Central"/>
</dbReference>
<dbReference type="GO" id="GO:0009244">
    <property type="term" value="P:lipopolysaccharide core region biosynthetic process"/>
    <property type="evidence" value="ECO:0000315"/>
    <property type="project" value="CACAO"/>
</dbReference>
<dbReference type="CDD" id="cd03789">
    <property type="entry name" value="GT9_LPS_heptosyltransferase"/>
    <property type="match status" value="1"/>
</dbReference>
<dbReference type="FunFam" id="3.40.50.2000:FF:000106">
    <property type="entry name" value="Lipopolysaccharide heptosyltransferase 1"/>
    <property type="match status" value="1"/>
</dbReference>
<dbReference type="FunFam" id="3.40.50.2000:FF:000075">
    <property type="entry name" value="Lipopolysaccharide heptosyltransferase I"/>
    <property type="match status" value="1"/>
</dbReference>
<dbReference type="Gene3D" id="3.40.50.2000">
    <property type="entry name" value="Glycogen Phosphorylase B"/>
    <property type="match status" value="2"/>
</dbReference>
<dbReference type="InterPro" id="IPR002201">
    <property type="entry name" value="Glyco_trans_9"/>
</dbReference>
<dbReference type="InterPro" id="IPR011908">
    <property type="entry name" value="LipoPS_heptosylTferase-I"/>
</dbReference>
<dbReference type="InterPro" id="IPR051199">
    <property type="entry name" value="LPS_LOS_Heptosyltrfase"/>
</dbReference>
<dbReference type="NCBIfam" id="TIGR02193">
    <property type="entry name" value="heptsyl_trn_I"/>
    <property type="match status" value="1"/>
</dbReference>
<dbReference type="NCBIfam" id="NF008204">
    <property type="entry name" value="PRK10964.1"/>
    <property type="match status" value="1"/>
</dbReference>
<dbReference type="PANTHER" id="PTHR30160:SF19">
    <property type="entry name" value="LIPOPOLYSACCHARIDE HEPTOSYLTRANSFERASE 1"/>
    <property type="match status" value="1"/>
</dbReference>
<dbReference type="PANTHER" id="PTHR30160">
    <property type="entry name" value="TETRAACYLDISACCHARIDE 4'-KINASE-RELATED"/>
    <property type="match status" value="1"/>
</dbReference>
<dbReference type="Pfam" id="PF01075">
    <property type="entry name" value="Glyco_transf_9"/>
    <property type="match status" value="1"/>
</dbReference>
<dbReference type="SUPFAM" id="SSF53756">
    <property type="entry name" value="UDP-Glycosyltransferase/glycogen phosphorylase"/>
    <property type="match status" value="1"/>
</dbReference>
<accession>P26469</accession>
<feature type="chain" id="PRO_0000207261" description="Lipopolysaccharide heptosyltransferase 1">
    <location>
        <begin position="1"/>
        <end position="317"/>
    </location>
</feature>
<feature type="binding site" evidence="1">
    <location>
        <position position="187"/>
    </location>
    <ligand>
        <name>ADP-L-glycero-beta-D-manno-heptose</name>
        <dbReference type="ChEBI" id="CHEBI:61506"/>
    </ligand>
</feature>
<feature type="binding site" evidence="1">
    <location>
        <position position="188"/>
    </location>
    <ligand>
        <name>ADP-L-glycero-beta-D-manno-heptose</name>
        <dbReference type="ChEBI" id="CHEBI:61506"/>
    </ligand>
</feature>
<feature type="binding site" evidence="1">
    <location>
        <position position="192"/>
    </location>
    <ligand>
        <name>ADP-L-glycero-beta-D-manno-heptose</name>
        <dbReference type="ChEBI" id="CHEBI:61506"/>
    </ligand>
</feature>
<feature type="binding site" evidence="1">
    <location>
        <position position="222"/>
    </location>
    <ligand>
        <name>ADP-L-glycero-beta-D-manno-heptose</name>
        <dbReference type="ChEBI" id="CHEBI:61506"/>
    </ligand>
</feature>
<feature type="binding site" evidence="1">
    <location>
        <position position="242"/>
    </location>
    <ligand>
        <name>ADP-L-glycero-beta-D-manno-heptose</name>
        <dbReference type="ChEBI" id="CHEBI:61506"/>
    </ligand>
</feature>
<feature type="binding site" evidence="1">
    <location>
        <position position="261"/>
    </location>
    <ligand>
        <name>ADP-L-glycero-beta-D-manno-heptose</name>
        <dbReference type="ChEBI" id="CHEBI:61506"/>
    </ligand>
</feature>
<feature type="binding site" evidence="1">
    <location>
        <position position="262"/>
    </location>
    <ligand>
        <name>ADP-L-glycero-beta-D-manno-heptose</name>
        <dbReference type="ChEBI" id="CHEBI:61506"/>
    </ligand>
</feature>
<feature type="binding site" evidence="1">
    <location>
        <position position="263"/>
    </location>
    <ligand>
        <name>ADP-L-glycero-beta-D-manno-heptose</name>
        <dbReference type="ChEBI" id="CHEBI:61506"/>
    </ligand>
</feature>
<feature type="binding site" evidence="1">
    <location>
        <position position="266"/>
    </location>
    <ligand>
        <name>ADP-L-glycero-beta-D-manno-heptose</name>
        <dbReference type="ChEBI" id="CHEBI:61506"/>
    </ligand>
</feature>
<protein>
    <recommendedName>
        <fullName evidence="5">Lipopolysaccharide heptosyltransferase 1</fullName>
        <ecNumber evidence="6">2.4.99.23</ecNumber>
    </recommendedName>
    <alternativeName>
        <fullName evidence="4">ADP-heptose:lipopolysaccharide heptosyltransferase I</fullName>
        <shortName evidence="5">ADP-heptose:LPS heptosyltransferase I</shortName>
        <shortName evidence="5">Heptosyltransferase I</shortName>
    </alternativeName>
</protein>
<comment type="function">
    <text evidence="3">Glycosyltransferase involved in the biosynthesis of the core oligosaccharide region of lipopolysaccharide (LPS) (PubMed:1527014). Catalyzes the addition of the first heptose unit to one 3-deoxy-D-manno-octulosonic acid (Kdo) residue of the Kdo2-lipid A module (PubMed:1527014).</text>
</comment>
<comment type="catalytic activity">
    <reaction evidence="6">
        <text>an alpha-Kdo-(2-&gt;4)-alpha-Kdo-(2-&gt;6)-lipid A + ADP-L-glycero-beta-D-manno-heptose = an L-alpha-D-Hep-(1-&gt;5)-[alpha-Kdo-(2-&gt;4)]-alpha-Kdo-(2-&gt;6)-lipid A + ADP + H(+)</text>
        <dbReference type="Rhea" id="RHEA:74067"/>
        <dbReference type="ChEBI" id="CHEBI:15378"/>
        <dbReference type="ChEBI" id="CHEBI:61506"/>
        <dbReference type="ChEBI" id="CHEBI:176431"/>
        <dbReference type="ChEBI" id="CHEBI:193068"/>
        <dbReference type="ChEBI" id="CHEBI:456216"/>
        <dbReference type="EC" id="2.4.99.23"/>
    </reaction>
</comment>
<comment type="pathway">
    <text evidence="3">Bacterial outer membrane biogenesis; LPS core biosynthesis.</text>
</comment>
<comment type="subcellular location">
    <subcellularLocation>
        <location evidence="2">Cell inner membrane</location>
        <topology evidence="2">Peripheral membrane protein</topology>
        <orientation evidence="2">Cytoplasmic side</orientation>
    </subcellularLocation>
</comment>
<comment type="similarity">
    <text evidence="5">Belongs to the glycosyltransferase 9 family.</text>
</comment>
<organism>
    <name type="scientific">Salmonella typhimurium (strain LT2 / SGSC1412 / ATCC 700720)</name>
    <dbReference type="NCBI Taxonomy" id="99287"/>
    <lineage>
        <taxon>Bacteria</taxon>
        <taxon>Pseudomonadati</taxon>
        <taxon>Pseudomonadota</taxon>
        <taxon>Gammaproteobacteria</taxon>
        <taxon>Enterobacterales</taxon>
        <taxon>Enterobacteriaceae</taxon>
        <taxon>Salmonella</taxon>
    </lineage>
</organism>
<name>WAAC_SALTY</name>
<evidence type="ECO:0000250" key="1">
    <source>
        <dbReference type="UniProtKB" id="P0DX54"/>
    </source>
</evidence>
<evidence type="ECO:0000250" key="2">
    <source>
        <dbReference type="UniProtKB" id="P24173"/>
    </source>
</evidence>
<evidence type="ECO:0000269" key="3">
    <source>
    </source>
</evidence>
<evidence type="ECO:0000303" key="4">
    <source>
    </source>
</evidence>
<evidence type="ECO:0000305" key="5"/>
<evidence type="ECO:0000305" key="6">
    <source>
    </source>
</evidence>
<keyword id="KW-0997">Cell inner membrane</keyword>
<keyword id="KW-1003">Cell membrane</keyword>
<keyword id="KW-0328">Glycosyltransferase</keyword>
<keyword id="KW-0448">Lipopolysaccharide biosynthesis</keyword>
<keyword id="KW-0472">Membrane</keyword>
<keyword id="KW-1185">Reference proteome</keyword>
<keyword id="KW-0808">Transferase</keyword>
<sequence>MRVLIVKTSSMGDVLHTLPALTDAQQAIPGIQFDWAVEEGFAQIPSWHSAVDRVIPVAIRRWRKAWFSAPIKAERTAFRRAVCANQYDAVIDAQGLVKSAALVTRLAHGIKHGMDWSTAREPLASLFYNRKHHIAKQQHAVERTRELFAKSLGYDKPQSQGDYAIAKHFLHCQQAVSDPYAVFLHATTRDDKHWPEANWRELIGLVGNTGLRIKLPWGAPHEEARAKRLAEGFDYVDVLPRMSLEEVARVLAGAKFVVSVDTGLSHLTAALDRPNITLYGPTDPGLIGGYGKNQMACCSPEQNLANLDATSVFGKIH</sequence>
<reference key="1">
    <citation type="journal article" date="1992" name="J. Biol. Chem.">
        <title>The rfaC gene of Salmonella typhimurium. Cloning, sequencing, and enzymatic function in heptose transfer to lipopolysaccharide.</title>
        <authorList>
            <person name="Sirisena D.M."/>
            <person name="Brozek K.A."/>
            <person name="Maclachlan P.R."/>
            <person name="Sanderson K.E."/>
            <person name="Raetz C.R.H."/>
        </authorList>
    </citation>
    <scope>NUCLEOTIDE SEQUENCE [GENOMIC DNA]</scope>
    <scope>FUNCTION</scope>
    <scope>PATHWAY</scope>
    <source>
        <strain>LT2</strain>
    </source>
</reference>
<reference key="2">
    <citation type="journal article" date="2001" name="Nature">
        <title>Complete genome sequence of Salmonella enterica serovar Typhimurium LT2.</title>
        <authorList>
            <person name="McClelland M."/>
            <person name="Sanderson K.E."/>
            <person name="Spieth J."/>
            <person name="Clifton S.W."/>
            <person name="Latreille P."/>
            <person name="Courtney L."/>
            <person name="Porwollik S."/>
            <person name="Ali J."/>
            <person name="Dante M."/>
            <person name="Du F."/>
            <person name="Hou S."/>
            <person name="Layman D."/>
            <person name="Leonard S."/>
            <person name="Nguyen C."/>
            <person name="Scott K."/>
            <person name="Holmes A."/>
            <person name="Grewal N."/>
            <person name="Mulvaney E."/>
            <person name="Ryan E."/>
            <person name="Sun H."/>
            <person name="Florea L."/>
            <person name="Miller W."/>
            <person name="Stoneking T."/>
            <person name="Nhan M."/>
            <person name="Waterston R."/>
            <person name="Wilson R.K."/>
        </authorList>
    </citation>
    <scope>NUCLEOTIDE SEQUENCE [LARGE SCALE GENOMIC DNA]</scope>
    <source>
        <strain>LT2 / SGSC1412 / ATCC 700720</strain>
    </source>
</reference>
<reference key="3">
    <citation type="journal article" date="1991" name="J. Bacteriol.">
        <title>Cloning, characterization, and DNA sequence of the rfaLK region for lipopolysaccharide synthesis in Salmonella typhimurium LT2.</title>
        <authorList>
            <person name="Maclachlan P.R."/>
            <person name="Kadam S.K."/>
            <person name="Sanderson K.E."/>
        </authorList>
    </citation>
    <scope>NUCLEOTIDE SEQUENCE [GENOMIC DNA] OF 214-317</scope>
    <source>
        <strain>LT2</strain>
    </source>
</reference>
<proteinExistence type="inferred from homology"/>
<gene>
    <name evidence="2" type="primary">waaC</name>
    <name evidence="4" type="synonym">rfaC</name>
    <name type="ordered locus">STM3712</name>
</gene>